<dbReference type="EC" id="2.3.1.275" evidence="1"/>
<dbReference type="EMBL" id="CP000232">
    <property type="protein sequence ID" value="ABC19634.1"/>
    <property type="molecule type" value="Genomic_DNA"/>
</dbReference>
<dbReference type="RefSeq" id="YP_430177.1">
    <property type="nucleotide sequence ID" value="NC_007644.1"/>
</dbReference>
<dbReference type="SMR" id="Q2RIV5"/>
<dbReference type="STRING" id="264732.Moth_1321"/>
<dbReference type="EnsemblBacteria" id="ABC19634">
    <property type="protein sequence ID" value="ABC19634"/>
    <property type="gene ID" value="Moth_1321"/>
</dbReference>
<dbReference type="KEGG" id="mta:Moth_1321"/>
<dbReference type="PATRIC" id="fig|264732.11.peg.1419"/>
<dbReference type="eggNOG" id="COG0344">
    <property type="taxonomic scope" value="Bacteria"/>
</dbReference>
<dbReference type="HOGENOM" id="CLU_081254_7_1_9"/>
<dbReference type="OrthoDB" id="9777124at2"/>
<dbReference type="UniPathway" id="UPA00085"/>
<dbReference type="GO" id="GO:0005886">
    <property type="term" value="C:plasma membrane"/>
    <property type="evidence" value="ECO:0007669"/>
    <property type="project" value="UniProtKB-SubCell"/>
</dbReference>
<dbReference type="GO" id="GO:0043772">
    <property type="term" value="F:acyl-phosphate glycerol-3-phosphate acyltransferase activity"/>
    <property type="evidence" value="ECO:0007669"/>
    <property type="project" value="UniProtKB-UniRule"/>
</dbReference>
<dbReference type="GO" id="GO:0008654">
    <property type="term" value="P:phospholipid biosynthetic process"/>
    <property type="evidence" value="ECO:0007669"/>
    <property type="project" value="UniProtKB-UniRule"/>
</dbReference>
<dbReference type="HAMAP" id="MF_01043">
    <property type="entry name" value="PlsY"/>
    <property type="match status" value="1"/>
</dbReference>
<dbReference type="InterPro" id="IPR003811">
    <property type="entry name" value="G3P_acylTferase_PlsY"/>
</dbReference>
<dbReference type="NCBIfam" id="TIGR00023">
    <property type="entry name" value="glycerol-3-phosphate 1-O-acyltransferase PlsY"/>
    <property type="match status" value="1"/>
</dbReference>
<dbReference type="PANTHER" id="PTHR30309:SF0">
    <property type="entry name" value="GLYCEROL-3-PHOSPHATE ACYLTRANSFERASE-RELATED"/>
    <property type="match status" value="1"/>
</dbReference>
<dbReference type="PANTHER" id="PTHR30309">
    <property type="entry name" value="INNER MEMBRANE PROTEIN YGIH"/>
    <property type="match status" value="1"/>
</dbReference>
<dbReference type="Pfam" id="PF02660">
    <property type="entry name" value="G3P_acyltransf"/>
    <property type="match status" value="1"/>
</dbReference>
<dbReference type="SMART" id="SM01207">
    <property type="entry name" value="G3P_acyltransf"/>
    <property type="match status" value="1"/>
</dbReference>
<comment type="function">
    <text evidence="1">Catalyzes the transfer of an acyl group from acyl-phosphate (acyl-PO(4)) to glycerol-3-phosphate (G3P) to form lysophosphatidic acid (LPA). This enzyme utilizes acyl-phosphate as fatty acyl donor, but not acyl-CoA or acyl-ACP.</text>
</comment>
<comment type="catalytic activity">
    <reaction evidence="1">
        <text>an acyl phosphate + sn-glycerol 3-phosphate = a 1-acyl-sn-glycero-3-phosphate + phosphate</text>
        <dbReference type="Rhea" id="RHEA:34075"/>
        <dbReference type="ChEBI" id="CHEBI:43474"/>
        <dbReference type="ChEBI" id="CHEBI:57597"/>
        <dbReference type="ChEBI" id="CHEBI:57970"/>
        <dbReference type="ChEBI" id="CHEBI:59918"/>
        <dbReference type="EC" id="2.3.1.275"/>
    </reaction>
</comment>
<comment type="pathway">
    <text evidence="1">Lipid metabolism; phospholipid metabolism.</text>
</comment>
<comment type="subunit">
    <text evidence="1">Probably interacts with PlsX.</text>
</comment>
<comment type="subcellular location">
    <subcellularLocation>
        <location evidence="1">Cell membrane</location>
        <topology evidence="1">Multi-pass membrane protein</topology>
    </subcellularLocation>
</comment>
<comment type="similarity">
    <text evidence="1">Belongs to the PlsY family.</text>
</comment>
<gene>
    <name evidence="1" type="primary">plsY2</name>
    <name type="ordered locus">Moth_1321</name>
</gene>
<proteinExistence type="inferred from homology"/>
<reference key="1">
    <citation type="journal article" date="2008" name="Environ. Microbiol.">
        <title>The complete genome sequence of Moorella thermoacetica (f. Clostridium thermoaceticum).</title>
        <authorList>
            <person name="Pierce E."/>
            <person name="Xie G."/>
            <person name="Barabote R.D."/>
            <person name="Saunders E."/>
            <person name="Han C.S."/>
            <person name="Detter J.C."/>
            <person name="Richardson P."/>
            <person name="Brettin T.S."/>
            <person name="Das A."/>
            <person name="Ljungdahl L.G."/>
            <person name="Ragsdale S.W."/>
        </authorList>
    </citation>
    <scope>NUCLEOTIDE SEQUENCE [LARGE SCALE GENOMIC DNA]</scope>
    <source>
        <strain>ATCC 39073 / JCM 9320</strain>
    </source>
</reference>
<sequence length="194" mass="20891">MWLLALVVAYLIGSIPTAYVVGRYLYGFDIRRRGSGNVGATNTLRTMGTIPGLVVLGVDALKGVLAVLLGQALGGPVLVILAALMAIVGHNWSIFLEFQGGRGVATTAGALLAMAPLALFWAFLIWLAVVIFSRYISLGSIVAAAVAPFLVIYFHRPWPYVLFTFVAAALVIYRHRPNIKRLLAGTEHKLGERS</sequence>
<name>PLSY2_MOOTA</name>
<organism>
    <name type="scientific">Moorella thermoacetica (strain ATCC 39073 / JCM 9320)</name>
    <dbReference type="NCBI Taxonomy" id="264732"/>
    <lineage>
        <taxon>Bacteria</taxon>
        <taxon>Bacillati</taxon>
        <taxon>Bacillota</taxon>
        <taxon>Clostridia</taxon>
        <taxon>Moorellales</taxon>
        <taxon>Moorellaceae</taxon>
        <taxon>Moorella</taxon>
    </lineage>
</organism>
<protein>
    <recommendedName>
        <fullName evidence="1">Glycerol-3-phosphate acyltransferase 2</fullName>
    </recommendedName>
    <alternativeName>
        <fullName evidence="1">Acyl-PO4 G3P acyltransferase 2</fullName>
    </alternativeName>
    <alternativeName>
        <fullName evidence="1">Acyl-phosphate--glycerol-3-phosphate acyltransferase 2</fullName>
    </alternativeName>
    <alternativeName>
        <fullName evidence="1">G3P acyltransferase 2</fullName>
        <shortName evidence="1">GPAT 2</shortName>
        <ecNumber evidence="1">2.3.1.275</ecNumber>
    </alternativeName>
    <alternativeName>
        <fullName evidence="1">Lysophosphatidic acid synthase 2</fullName>
        <shortName evidence="1">LPA synthase 2</shortName>
    </alternativeName>
</protein>
<keyword id="KW-1003">Cell membrane</keyword>
<keyword id="KW-0444">Lipid biosynthesis</keyword>
<keyword id="KW-0443">Lipid metabolism</keyword>
<keyword id="KW-0472">Membrane</keyword>
<keyword id="KW-0594">Phospholipid biosynthesis</keyword>
<keyword id="KW-1208">Phospholipid metabolism</keyword>
<keyword id="KW-0808">Transferase</keyword>
<keyword id="KW-0812">Transmembrane</keyword>
<keyword id="KW-1133">Transmembrane helix</keyword>
<evidence type="ECO:0000255" key="1">
    <source>
        <dbReference type="HAMAP-Rule" id="MF_01043"/>
    </source>
</evidence>
<accession>Q2RIV5</accession>
<feature type="chain" id="PRO_0000250312" description="Glycerol-3-phosphate acyltransferase 2">
    <location>
        <begin position="1"/>
        <end position="194"/>
    </location>
</feature>
<feature type="transmembrane region" description="Helical" evidence="1">
    <location>
        <begin position="1"/>
        <end position="21"/>
    </location>
</feature>
<feature type="transmembrane region" description="Helical" evidence="1">
    <location>
        <begin position="64"/>
        <end position="84"/>
    </location>
</feature>
<feature type="transmembrane region" description="Helical" evidence="1">
    <location>
        <begin position="112"/>
        <end position="132"/>
    </location>
</feature>
<feature type="transmembrane region" description="Helical" evidence="1">
    <location>
        <begin position="135"/>
        <end position="155"/>
    </location>
</feature>
<feature type="transmembrane region" description="Helical" evidence="1">
    <location>
        <begin position="156"/>
        <end position="173"/>
    </location>
</feature>